<accession>Q10660</accession>
<protein>
    <recommendedName>
        <fullName evidence="5">Decapping nuclease dom-3</fullName>
        <ecNumber evidence="1">3.6.1.-</ecNumber>
    </recommendedName>
    <alternativeName>
        <fullName evidence="5">Dom-3 homolog Z</fullName>
    </alternativeName>
    <alternativeName>
        <fullName evidence="5">NAD-capped RNA hydrolase dom-3</fullName>
        <shortName evidence="5">DeNADding enzyme dom-3</shortName>
        <ecNumber evidence="1">3.6.1.-</ecNumber>
    </alternativeName>
</protein>
<evidence type="ECO:0000250" key="1">
    <source>
        <dbReference type="UniProtKB" id="O70348"/>
    </source>
</evidence>
<evidence type="ECO:0000250" key="2">
    <source>
        <dbReference type="UniProtKB" id="O77932"/>
    </source>
</evidence>
<evidence type="ECO:0000256" key="3">
    <source>
        <dbReference type="SAM" id="MobiDB-lite"/>
    </source>
</evidence>
<evidence type="ECO:0000269" key="4">
    <source>
    </source>
</evidence>
<evidence type="ECO:0000305" key="5"/>
<evidence type="ECO:0000312" key="6">
    <source>
        <dbReference type="WormBase" id="F54C1.2"/>
    </source>
</evidence>
<sequence>MSHYGGNPRGNSSHQFGRKDFQQSDSKHIPKITGQPLPNEVQIPFDNMIYETRNPPKFEKQAKFISEYCINYDRKLQLGRMRAKKFHDKLPPNNLSLDLGKGFETFDPKEGDEKIIMLLEWINQMAPEGGRLKKVIHEADVVCWRGLITKICSTIYNKEEGWRIDAIKRKGVIFLCEEKTEQAKNRDLNQTDLDKRMSYWGHKFEQYVTLDDDAEQPDTSSPVTTKEEYAVVFRNDLQTDQRLNPEKRSIGIFYSGEVDCLDRHGNMLELKTQKGELGHGFYKYSKSFKWWLQSSLVNVDHIIVGLRTQEGHVKSLTSLRTREIPQRASWNFRAGFEFLSTIFTYILNCLEKDGDACVIEYRSEMGIHKGIQMRRVPVDEFDFVPNEFLEKFC</sequence>
<comment type="function">
    <text evidence="1">Decapping enzyme for NAD-capped RNAs: specifically hydrolyzes the nicotinamide adenine dinucleotide (NAD) cap from a subset of RNAs by removing the entire NAD moiety from the 5'-end of an NAD-capped RNA. The NAD-cap is present at the 5'-end of some RNAs and snoRNAs. In contrast to the canonical 5'-end N7 methylguanosine (m7G) cap, the NAD cap promotes mRNA decay. Also acts as a non-canonical decapping enzyme that removes the entire cap structure of m7G capped or incompletely capped RNAs and mediates their subsequent degradation. Specifically degrades pre-mRNAs with a defective 5'-end m7G cap and is part of a pre-mRNA capping quality control. Also possesses RNA 5'-pyrophosphohydrolase activity by hydrolyzing the 5'-end triphosphate to release pyrophosphates (By similarity).</text>
</comment>
<comment type="catalytic activity">
    <reaction evidence="1">
        <text>a 5'-end NAD(+)-phospho-ribonucleoside in mRNA + H2O = a 5'-end phospho-ribonucleoside in mRNA + NAD(+) + H(+)</text>
        <dbReference type="Rhea" id="RHEA:60880"/>
        <dbReference type="Rhea" id="RHEA-COMP:15692"/>
        <dbReference type="Rhea" id="RHEA-COMP:15698"/>
        <dbReference type="ChEBI" id="CHEBI:15377"/>
        <dbReference type="ChEBI" id="CHEBI:15378"/>
        <dbReference type="ChEBI" id="CHEBI:57540"/>
        <dbReference type="ChEBI" id="CHEBI:138282"/>
        <dbReference type="ChEBI" id="CHEBI:144029"/>
    </reaction>
    <physiologicalReaction direction="left-to-right" evidence="1">
        <dbReference type="Rhea" id="RHEA:60881"/>
    </physiologicalReaction>
</comment>
<comment type="catalytic activity">
    <reaction evidence="2">
        <text>a 5'-end (N(7)-methyl 5'-triphosphoguanosine)-ribonucleoside-ribonucleotide in mRNA + H2O = a (N(7)-methyl 5'-triphosphoguanosine)-nucleoside + a 5'-end phospho-ribonucleoside in mRNA + H(+)</text>
        <dbReference type="Rhea" id="RHEA:66928"/>
        <dbReference type="Rhea" id="RHEA-COMP:15692"/>
        <dbReference type="Rhea" id="RHEA-COMP:17313"/>
        <dbReference type="ChEBI" id="CHEBI:15377"/>
        <dbReference type="ChEBI" id="CHEBI:15378"/>
        <dbReference type="ChEBI" id="CHEBI:138282"/>
        <dbReference type="ChEBI" id="CHEBI:172876"/>
        <dbReference type="ChEBI" id="CHEBI:172877"/>
    </reaction>
    <physiologicalReaction direction="left-to-right" evidence="2">
        <dbReference type="Rhea" id="RHEA:66929"/>
    </physiologicalReaction>
</comment>
<comment type="catalytic activity">
    <reaction evidence="1">
        <text>a 5'-end triphospho-ribonucleoside in mRNA + H2O = a 5'-end phospho-ribonucleoside in mRNA + diphosphate + H(+)</text>
        <dbReference type="Rhea" id="RHEA:78683"/>
        <dbReference type="Rhea" id="RHEA-COMP:15692"/>
        <dbReference type="Rhea" id="RHEA-COMP:17164"/>
        <dbReference type="ChEBI" id="CHEBI:15377"/>
        <dbReference type="ChEBI" id="CHEBI:15378"/>
        <dbReference type="ChEBI" id="CHEBI:33019"/>
        <dbReference type="ChEBI" id="CHEBI:138282"/>
        <dbReference type="ChEBI" id="CHEBI:167618"/>
    </reaction>
    <physiologicalReaction direction="left-to-right" evidence="1">
        <dbReference type="Rhea" id="RHEA:78684"/>
    </physiologicalReaction>
</comment>
<comment type="cofactor">
    <cofactor evidence="1">
        <name>Mg(2+)</name>
        <dbReference type="ChEBI" id="CHEBI:18420"/>
    </cofactor>
    <text evidence="1">Binds 2 magnesium ions.</text>
</comment>
<comment type="developmental stage">
    <text evidence="4">Present at all stages. Levels increase from L1 to adult stages.</text>
</comment>
<comment type="similarity">
    <text evidence="5">Belongs to the DXO/Dom3Z family.</text>
</comment>
<gene>
    <name evidence="6" type="primary">dom-3</name>
    <name type="ORF">F54C1.2</name>
</gene>
<name>DXO_CAEEL</name>
<feature type="chain" id="PRO_0000079976" description="Decapping nuclease dom-3">
    <location>
        <begin position="1"/>
        <end position="393"/>
    </location>
</feature>
<feature type="region of interest" description="Disordered" evidence="3">
    <location>
        <begin position="1"/>
        <end position="37"/>
    </location>
</feature>
<feature type="compositionally biased region" description="Basic and acidic residues" evidence="3">
    <location>
        <begin position="17"/>
        <end position="28"/>
    </location>
</feature>
<feature type="binding site" evidence="1">
    <location>
        <position position="74"/>
    </location>
    <ligand>
        <name>substrate</name>
    </ligand>
</feature>
<feature type="binding site" evidence="1">
    <location>
        <position position="113"/>
    </location>
    <ligand>
        <name>substrate</name>
    </ligand>
</feature>
<feature type="binding site" evidence="1">
    <location>
        <begin position="144"/>
        <end position="146"/>
    </location>
    <ligand>
        <name>substrate</name>
    </ligand>
</feature>
<feature type="binding site" evidence="1">
    <location>
        <position position="205"/>
    </location>
    <ligand>
        <name>Mg(2+)</name>
        <dbReference type="ChEBI" id="CHEBI:18420"/>
        <label>1</label>
    </ligand>
</feature>
<feature type="binding site" evidence="1">
    <location>
        <position position="205"/>
    </location>
    <ligand>
        <name>Mg(2+)</name>
        <dbReference type="ChEBI" id="CHEBI:18420"/>
        <label>2</label>
    </ligand>
</feature>
<feature type="binding site" evidence="1">
    <location>
        <position position="257"/>
    </location>
    <ligand>
        <name>Mg(2+)</name>
        <dbReference type="ChEBI" id="CHEBI:18420"/>
        <label>2</label>
    </ligand>
</feature>
<feature type="binding site" evidence="1">
    <location>
        <position position="257"/>
    </location>
    <ligand>
        <name>substrate</name>
    </ligand>
</feature>
<feature type="binding site" evidence="1">
    <location>
        <position position="259"/>
    </location>
    <ligand>
        <name>Mg(2+)</name>
        <dbReference type="ChEBI" id="CHEBI:18420"/>
        <label>1</label>
    </ligand>
</feature>
<feature type="binding site" evidence="1">
    <location>
        <position position="259"/>
    </location>
    <ligand>
        <name>Mg(2+)</name>
        <dbReference type="ChEBI" id="CHEBI:18420"/>
        <label>2</label>
    </ligand>
</feature>
<feature type="binding site" evidence="1">
    <location>
        <position position="269"/>
    </location>
    <ligand>
        <name>Mg(2+)</name>
        <dbReference type="ChEBI" id="CHEBI:18420"/>
        <label>1</label>
    </ligand>
</feature>
<feature type="binding site" evidence="1">
    <location>
        <position position="270"/>
    </location>
    <ligand>
        <name>Mg(2+)</name>
        <dbReference type="ChEBI" id="CHEBI:18420"/>
        <label>1</label>
    </ligand>
</feature>
<feature type="binding site" evidence="1">
    <location>
        <position position="271"/>
    </location>
    <ligand>
        <name>substrate</name>
    </ligand>
</feature>
<feature type="binding site" evidence="1">
    <location>
        <position position="293"/>
    </location>
    <ligand>
        <name>substrate</name>
    </ligand>
</feature>
<dbReference type="EC" id="3.6.1.-" evidence="1"/>
<dbReference type="EMBL" id="U34893">
    <property type="protein sequence ID" value="AAB01720.1"/>
    <property type="molecule type" value="mRNA"/>
</dbReference>
<dbReference type="EMBL" id="FO080890">
    <property type="protein sequence ID" value="CCD67543.1"/>
    <property type="molecule type" value="Genomic_DNA"/>
</dbReference>
<dbReference type="PIR" id="S60465">
    <property type="entry name" value="S60465"/>
</dbReference>
<dbReference type="RefSeq" id="NP_491496.1">
    <property type="nucleotide sequence ID" value="NM_059095.8"/>
</dbReference>
<dbReference type="SMR" id="Q10660"/>
<dbReference type="FunCoup" id="Q10660">
    <property type="interactions" value="1776"/>
</dbReference>
<dbReference type="STRING" id="6239.F54C1.2.1"/>
<dbReference type="PaxDb" id="6239-F54C1.2.2"/>
<dbReference type="PeptideAtlas" id="Q10660"/>
<dbReference type="EnsemblMetazoa" id="F54C1.2.1">
    <property type="protein sequence ID" value="F54C1.2.1"/>
    <property type="gene ID" value="WBGene00001050"/>
</dbReference>
<dbReference type="GeneID" id="172124"/>
<dbReference type="KEGG" id="cel:CELE_F54C1.2"/>
<dbReference type="UCSC" id="F54C1.2.1">
    <property type="organism name" value="c. elegans"/>
</dbReference>
<dbReference type="AGR" id="WB:WBGene00001050"/>
<dbReference type="CTD" id="172124"/>
<dbReference type="WormBase" id="F54C1.2">
    <property type="protein sequence ID" value="CE11044"/>
    <property type="gene ID" value="WBGene00001050"/>
    <property type="gene designation" value="dom-3"/>
</dbReference>
<dbReference type="eggNOG" id="KOG1982">
    <property type="taxonomic scope" value="Eukaryota"/>
</dbReference>
<dbReference type="GeneTree" id="ENSGT00390000006425"/>
<dbReference type="HOGENOM" id="CLU_024877_1_2_1"/>
<dbReference type="InParanoid" id="Q10660"/>
<dbReference type="OMA" id="ACTPYEN"/>
<dbReference type="OrthoDB" id="5853397at2759"/>
<dbReference type="PhylomeDB" id="Q10660"/>
<dbReference type="PRO" id="PR:Q10660"/>
<dbReference type="Proteomes" id="UP000001940">
    <property type="component" value="Chromosome I"/>
</dbReference>
<dbReference type="Bgee" id="WBGene00001050">
    <property type="expression patterns" value="Expressed in adult organism and 3 other cell types or tissues"/>
</dbReference>
<dbReference type="GO" id="GO:0005829">
    <property type="term" value="C:cytosol"/>
    <property type="evidence" value="ECO:0000318"/>
    <property type="project" value="GO_Central"/>
</dbReference>
<dbReference type="GO" id="GO:0005634">
    <property type="term" value="C:nucleus"/>
    <property type="evidence" value="ECO:0000318"/>
    <property type="project" value="GO_Central"/>
</dbReference>
<dbReference type="GO" id="GO:0046872">
    <property type="term" value="F:metal ion binding"/>
    <property type="evidence" value="ECO:0007669"/>
    <property type="project" value="UniProtKB-KW"/>
</dbReference>
<dbReference type="GO" id="GO:0034353">
    <property type="term" value="F:mRNA 5'-diphosphatase activity"/>
    <property type="evidence" value="ECO:0000318"/>
    <property type="project" value="GO_Central"/>
</dbReference>
<dbReference type="GO" id="GO:0004518">
    <property type="term" value="F:nuclease activity"/>
    <property type="evidence" value="ECO:0007669"/>
    <property type="project" value="UniProtKB-KW"/>
</dbReference>
<dbReference type="GO" id="GO:0000166">
    <property type="term" value="F:nucleotide binding"/>
    <property type="evidence" value="ECO:0007669"/>
    <property type="project" value="UniProtKB-KW"/>
</dbReference>
<dbReference type="GO" id="GO:0003723">
    <property type="term" value="F:RNA binding"/>
    <property type="evidence" value="ECO:0007669"/>
    <property type="project" value="UniProtKB-KW"/>
</dbReference>
<dbReference type="GO" id="GO:0110152">
    <property type="term" value="F:RNA NAD+-cap (NAD+-forming) hydrolase activity"/>
    <property type="evidence" value="ECO:0007669"/>
    <property type="project" value="RHEA"/>
</dbReference>
<dbReference type="GO" id="GO:0110155">
    <property type="term" value="P:NAD-cap decapping"/>
    <property type="evidence" value="ECO:0000318"/>
    <property type="project" value="GO_Central"/>
</dbReference>
<dbReference type="GO" id="GO:0000956">
    <property type="term" value="P:nuclear-transcribed mRNA catabolic process"/>
    <property type="evidence" value="ECO:0000318"/>
    <property type="project" value="GO_Central"/>
</dbReference>
<dbReference type="InterPro" id="IPR013961">
    <property type="entry name" value="RAI1"/>
</dbReference>
<dbReference type="InterPro" id="IPR039039">
    <property type="entry name" value="RAI1-like_fam"/>
</dbReference>
<dbReference type="PANTHER" id="PTHR12395:SF9">
    <property type="entry name" value="DECAPPING AND EXORIBONUCLEASE PROTEIN"/>
    <property type="match status" value="1"/>
</dbReference>
<dbReference type="PANTHER" id="PTHR12395">
    <property type="entry name" value="DOM-3 RELATED"/>
    <property type="match status" value="1"/>
</dbReference>
<dbReference type="Pfam" id="PF08652">
    <property type="entry name" value="RAI1"/>
    <property type="match status" value="1"/>
</dbReference>
<proteinExistence type="evidence at transcript level"/>
<reference key="1">
    <citation type="journal article" date="1995" name="Genetics">
        <title>Phenotypic and molecular analysis of mes-3, a maternal-effect gene required for proliferation and viability of the germ line in C. elegans.</title>
        <authorList>
            <person name="Paulsen J.E."/>
            <person name="Capowski E.E."/>
            <person name="Strome S."/>
        </authorList>
    </citation>
    <scope>NUCLEOTIDE SEQUENCE [MRNA]</scope>
    <scope>DEVELOPMENTAL STAGE</scope>
    <source>
        <strain>Bristol N2</strain>
    </source>
</reference>
<reference key="2">
    <citation type="journal article" date="1998" name="Science">
        <title>Genome sequence of the nematode C. elegans: a platform for investigating biology.</title>
        <authorList>
            <consortium name="The C. elegans sequencing consortium"/>
        </authorList>
    </citation>
    <scope>NUCLEOTIDE SEQUENCE [LARGE SCALE GENOMIC DNA]</scope>
    <source>
        <strain>Bristol N2</strain>
    </source>
</reference>
<keyword id="KW-0378">Hydrolase</keyword>
<keyword id="KW-0460">Magnesium</keyword>
<keyword id="KW-0479">Metal-binding</keyword>
<keyword id="KW-0540">Nuclease</keyword>
<keyword id="KW-0547">Nucleotide-binding</keyword>
<keyword id="KW-1185">Reference proteome</keyword>
<keyword id="KW-0694">RNA-binding</keyword>
<organism>
    <name type="scientific">Caenorhabditis elegans</name>
    <dbReference type="NCBI Taxonomy" id="6239"/>
    <lineage>
        <taxon>Eukaryota</taxon>
        <taxon>Metazoa</taxon>
        <taxon>Ecdysozoa</taxon>
        <taxon>Nematoda</taxon>
        <taxon>Chromadorea</taxon>
        <taxon>Rhabditida</taxon>
        <taxon>Rhabditina</taxon>
        <taxon>Rhabditomorpha</taxon>
        <taxon>Rhabditoidea</taxon>
        <taxon>Rhabditidae</taxon>
        <taxon>Peloderinae</taxon>
        <taxon>Caenorhabditis</taxon>
    </lineage>
</organism>